<reference key="1">
    <citation type="submission" date="2008-01" db="EMBL/GenBank/DDBJ databases">
        <title>Complete sequence of chromosome of Caulobacter sp. K31.</title>
        <authorList>
            <consortium name="US DOE Joint Genome Institute"/>
            <person name="Copeland A."/>
            <person name="Lucas S."/>
            <person name="Lapidus A."/>
            <person name="Barry K."/>
            <person name="Glavina del Rio T."/>
            <person name="Dalin E."/>
            <person name="Tice H."/>
            <person name="Pitluck S."/>
            <person name="Bruce D."/>
            <person name="Goodwin L."/>
            <person name="Thompson L.S."/>
            <person name="Brettin T."/>
            <person name="Detter J.C."/>
            <person name="Han C."/>
            <person name="Schmutz J."/>
            <person name="Larimer F."/>
            <person name="Land M."/>
            <person name="Hauser L."/>
            <person name="Kyrpides N."/>
            <person name="Kim E."/>
            <person name="Stephens C."/>
            <person name="Richardson P."/>
        </authorList>
    </citation>
    <scope>NUCLEOTIDE SEQUENCE [LARGE SCALE GENOMIC DNA]</scope>
    <source>
        <strain>K31</strain>
    </source>
</reference>
<organism>
    <name type="scientific">Caulobacter sp. (strain K31)</name>
    <dbReference type="NCBI Taxonomy" id="366602"/>
    <lineage>
        <taxon>Bacteria</taxon>
        <taxon>Pseudomonadati</taxon>
        <taxon>Pseudomonadota</taxon>
        <taxon>Alphaproteobacteria</taxon>
        <taxon>Caulobacterales</taxon>
        <taxon>Caulobacteraceae</taxon>
        <taxon>Caulobacter</taxon>
    </lineage>
</organism>
<feature type="initiator methionine" description="Removed" evidence="1">
    <location>
        <position position="1"/>
    </location>
</feature>
<feature type="chain" id="PRO_1000075694" description="Formamidopyrimidine-DNA glycosylase">
    <location>
        <begin position="2"/>
        <end position="287"/>
    </location>
</feature>
<feature type="zinc finger region" description="FPG-type" evidence="2">
    <location>
        <begin position="251"/>
        <end position="287"/>
    </location>
</feature>
<feature type="active site" description="Schiff-base intermediate with DNA" evidence="2">
    <location>
        <position position="2"/>
    </location>
</feature>
<feature type="active site" description="Proton donor" evidence="2">
    <location>
        <position position="3"/>
    </location>
</feature>
<feature type="active site" description="Proton donor; for beta-elimination activity" evidence="2">
    <location>
        <position position="58"/>
    </location>
</feature>
<feature type="active site" description="Proton donor; for delta-elimination activity" evidence="2">
    <location>
        <position position="277"/>
    </location>
</feature>
<feature type="binding site" evidence="2">
    <location>
        <position position="104"/>
    </location>
    <ligand>
        <name>DNA</name>
        <dbReference type="ChEBI" id="CHEBI:16991"/>
    </ligand>
</feature>
<feature type="binding site" evidence="2">
    <location>
        <position position="123"/>
    </location>
    <ligand>
        <name>DNA</name>
        <dbReference type="ChEBI" id="CHEBI:16991"/>
    </ligand>
</feature>
<feature type="binding site" evidence="2">
    <location>
        <position position="166"/>
    </location>
    <ligand>
        <name>DNA</name>
        <dbReference type="ChEBI" id="CHEBI:16991"/>
    </ligand>
</feature>
<protein>
    <recommendedName>
        <fullName evidence="2">Formamidopyrimidine-DNA glycosylase</fullName>
        <shortName evidence="2">Fapy-DNA glycosylase</shortName>
        <ecNumber evidence="2">3.2.2.23</ecNumber>
    </recommendedName>
    <alternativeName>
        <fullName evidence="2">DNA-(apurinic or apyrimidinic site) lyase MutM</fullName>
        <shortName evidence="2">AP lyase MutM</shortName>
        <ecNumber evidence="2">4.2.99.18</ecNumber>
    </alternativeName>
</protein>
<sequence>MPELPEVETVRRGLEPVLSGARLARVRANRPDLRFPLPDGFVQRLTGAKILRLDRRAKYLLVPLDRGDTLVMHLGMTGRFEIAAPSGTIRPGDFAREVTPDDKHAHVVFETEDGAVVTYYDPRRFGFMDLIATDKVDRHPWFAAMGPEPLGEGFDAKTLVAAFNGRKQGPKTLLLDQKTVAGLGNIYVCEALHRAHISPFKPAGMIAGKRLGPLTTAIKDVLAEAVEVGGSSLKDFAATDGALGYFQHRFRVYDREGQPCPTPGCKGMIGREVQAGRSTFFCPVCQV</sequence>
<accession>B0T7D1</accession>
<comment type="function">
    <text evidence="2">Involved in base excision repair of DNA damaged by oxidation or by mutagenic agents. Acts as a DNA glycosylase that recognizes and removes damaged bases. Has a preference for oxidized purines, such as 7,8-dihydro-8-oxoguanine (8-oxoG). Has AP (apurinic/apyrimidinic) lyase activity and introduces nicks in the DNA strand. Cleaves the DNA backbone by beta-delta elimination to generate a single-strand break at the site of the removed base with both 3'- and 5'-phosphates.</text>
</comment>
<comment type="catalytic activity">
    <reaction evidence="2">
        <text>Hydrolysis of DNA containing ring-opened 7-methylguanine residues, releasing 2,6-diamino-4-hydroxy-5-(N-methyl)formamidopyrimidine.</text>
        <dbReference type="EC" id="3.2.2.23"/>
    </reaction>
</comment>
<comment type="catalytic activity">
    <reaction evidence="2">
        <text>2'-deoxyribonucleotide-(2'-deoxyribose 5'-phosphate)-2'-deoxyribonucleotide-DNA = a 3'-end 2'-deoxyribonucleotide-(2,3-dehydro-2,3-deoxyribose 5'-phosphate)-DNA + a 5'-end 5'-phospho-2'-deoxyribonucleoside-DNA + H(+)</text>
        <dbReference type="Rhea" id="RHEA:66592"/>
        <dbReference type="Rhea" id="RHEA-COMP:13180"/>
        <dbReference type="Rhea" id="RHEA-COMP:16897"/>
        <dbReference type="Rhea" id="RHEA-COMP:17067"/>
        <dbReference type="ChEBI" id="CHEBI:15378"/>
        <dbReference type="ChEBI" id="CHEBI:136412"/>
        <dbReference type="ChEBI" id="CHEBI:157695"/>
        <dbReference type="ChEBI" id="CHEBI:167181"/>
        <dbReference type="EC" id="4.2.99.18"/>
    </reaction>
</comment>
<comment type="cofactor">
    <cofactor evidence="2">
        <name>Zn(2+)</name>
        <dbReference type="ChEBI" id="CHEBI:29105"/>
    </cofactor>
    <text evidence="2">Binds 1 zinc ion per subunit.</text>
</comment>
<comment type="subunit">
    <text evidence="2">Monomer.</text>
</comment>
<comment type="similarity">
    <text evidence="2">Belongs to the FPG family.</text>
</comment>
<keyword id="KW-0227">DNA damage</keyword>
<keyword id="KW-0234">DNA repair</keyword>
<keyword id="KW-0238">DNA-binding</keyword>
<keyword id="KW-0326">Glycosidase</keyword>
<keyword id="KW-0378">Hydrolase</keyword>
<keyword id="KW-0456">Lyase</keyword>
<keyword id="KW-0479">Metal-binding</keyword>
<keyword id="KW-0511">Multifunctional enzyme</keyword>
<keyword id="KW-0862">Zinc</keyword>
<keyword id="KW-0863">Zinc-finger</keyword>
<evidence type="ECO:0000250" key="1"/>
<evidence type="ECO:0000255" key="2">
    <source>
        <dbReference type="HAMAP-Rule" id="MF_00103"/>
    </source>
</evidence>
<gene>
    <name evidence="2" type="primary">mutM</name>
    <name evidence="2" type="synonym">fpg</name>
    <name type="ordered locus">Caul_5075</name>
</gene>
<proteinExistence type="inferred from homology"/>
<dbReference type="EC" id="3.2.2.23" evidence="2"/>
<dbReference type="EC" id="4.2.99.18" evidence="2"/>
<dbReference type="EMBL" id="CP000927">
    <property type="protein sequence ID" value="ABZ74195.1"/>
    <property type="molecule type" value="Genomic_DNA"/>
</dbReference>
<dbReference type="SMR" id="B0T7D1"/>
<dbReference type="STRING" id="366602.Caul_5075"/>
<dbReference type="KEGG" id="cak:Caul_5075"/>
<dbReference type="eggNOG" id="COG0266">
    <property type="taxonomic scope" value="Bacteria"/>
</dbReference>
<dbReference type="HOGENOM" id="CLU_038423_1_1_5"/>
<dbReference type="OrthoDB" id="9800855at2"/>
<dbReference type="GO" id="GO:0034039">
    <property type="term" value="F:8-oxo-7,8-dihydroguanine DNA N-glycosylase activity"/>
    <property type="evidence" value="ECO:0007669"/>
    <property type="project" value="TreeGrafter"/>
</dbReference>
<dbReference type="GO" id="GO:0140078">
    <property type="term" value="F:class I DNA-(apurinic or apyrimidinic site) endonuclease activity"/>
    <property type="evidence" value="ECO:0007669"/>
    <property type="project" value="UniProtKB-EC"/>
</dbReference>
<dbReference type="GO" id="GO:0003684">
    <property type="term" value="F:damaged DNA binding"/>
    <property type="evidence" value="ECO:0007669"/>
    <property type="project" value="InterPro"/>
</dbReference>
<dbReference type="GO" id="GO:0008270">
    <property type="term" value="F:zinc ion binding"/>
    <property type="evidence" value="ECO:0007669"/>
    <property type="project" value="UniProtKB-UniRule"/>
</dbReference>
<dbReference type="GO" id="GO:0006284">
    <property type="term" value="P:base-excision repair"/>
    <property type="evidence" value="ECO:0007669"/>
    <property type="project" value="InterPro"/>
</dbReference>
<dbReference type="CDD" id="cd20335">
    <property type="entry name" value="BRcat_RBR"/>
    <property type="match status" value="1"/>
</dbReference>
<dbReference type="CDD" id="cd08966">
    <property type="entry name" value="EcFpg-like_N"/>
    <property type="match status" value="1"/>
</dbReference>
<dbReference type="FunFam" id="1.10.8.50:FF:000003">
    <property type="entry name" value="Formamidopyrimidine-DNA glycosylase"/>
    <property type="match status" value="1"/>
</dbReference>
<dbReference type="Gene3D" id="1.10.8.50">
    <property type="match status" value="1"/>
</dbReference>
<dbReference type="Gene3D" id="3.20.190.10">
    <property type="entry name" value="MutM-like, N-terminal"/>
    <property type="match status" value="1"/>
</dbReference>
<dbReference type="HAMAP" id="MF_00103">
    <property type="entry name" value="Fapy_DNA_glycosyl"/>
    <property type="match status" value="1"/>
</dbReference>
<dbReference type="InterPro" id="IPR015886">
    <property type="entry name" value="DNA_glyclase/AP_lyase_DNA-bd"/>
</dbReference>
<dbReference type="InterPro" id="IPR015887">
    <property type="entry name" value="DNA_glyclase_Znf_dom_DNA_BS"/>
</dbReference>
<dbReference type="InterPro" id="IPR020629">
    <property type="entry name" value="Formamido-pyr_DNA_Glyclase"/>
</dbReference>
<dbReference type="InterPro" id="IPR012319">
    <property type="entry name" value="FPG_cat"/>
</dbReference>
<dbReference type="InterPro" id="IPR035937">
    <property type="entry name" value="MutM-like_N-ter"/>
</dbReference>
<dbReference type="InterPro" id="IPR010979">
    <property type="entry name" value="Ribosomal_uS13-like_H2TH"/>
</dbReference>
<dbReference type="InterPro" id="IPR000214">
    <property type="entry name" value="Znf_DNA_glyclase/AP_lyase"/>
</dbReference>
<dbReference type="InterPro" id="IPR010663">
    <property type="entry name" value="Znf_FPG/IleRS"/>
</dbReference>
<dbReference type="NCBIfam" id="TIGR00577">
    <property type="entry name" value="fpg"/>
    <property type="match status" value="1"/>
</dbReference>
<dbReference type="NCBIfam" id="NF002211">
    <property type="entry name" value="PRK01103.1"/>
    <property type="match status" value="1"/>
</dbReference>
<dbReference type="PANTHER" id="PTHR22993">
    <property type="entry name" value="FORMAMIDOPYRIMIDINE-DNA GLYCOSYLASE"/>
    <property type="match status" value="1"/>
</dbReference>
<dbReference type="PANTHER" id="PTHR22993:SF9">
    <property type="entry name" value="FORMAMIDOPYRIMIDINE-DNA GLYCOSYLASE"/>
    <property type="match status" value="1"/>
</dbReference>
<dbReference type="Pfam" id="PF01149">
    <property type="entry name" value="Fapy_DNA_glyco"/>
    <property type="match status" value="1"/>
</dbReference>
<dbReference type="Pfam" id="PF06831">
    <property type="entry name" value="H2TH"/>
    <property type="match status" value="1"/>
</dbReference>
<dbReference type="Pfam" id="PF06827">
    <property type="entry name" value="zf-FPG_IleRS"/>
    <property type="match status" value="1"/>
</dbReference>
<dbReference type="SMART" id="SM00898">
    <property type="entry name" value="Fapy_DNA_glyco"/>
    <property type="match status" value="1"/>
</dbReference>
<dbReference type="SMART" id="SM01232">
    <property type="entry name" value="H2TH"/>
    <property type="match status" value="1"/>
</dbReference>
<dbReference type="SUPFAM" id="SSF57716">
    <property type="entry name" value="Glucocorticoid receptor-like (DNA-binding domain)"/>
    <property type="match status" value="1"/>
</dbReference>
<dbReference type="SUPFAM" id="SSF81624">
    <property type="entry name" value="N-terminal domain of MutM-like DNA repair proteins"/>
    <property type="match status" value="1"/>
</dbReference>
<dbReference type="SUPFAM" id="SSF46946">
    <property type="entry name" value="S13-like H2TH domain"/>
    <property type="match status" value="1"/>
</dbReference>
<dbReference type="PROSITE" id="PS51068">
    <property type="entry name" value="FPG_CAT"/>
    <property type="match status" value="1"/>
</dbReference>
<dbReference type="PROSITE" id="PS01242">
    <property type="entry name" value="ZF_FPG_1"/>
    <property type="match status" value="1"/>
</dbReference>
<dbReference type="PROSITE" id="PS51066">
    <property type="entry name" value="ZF_FPG_2"/>
    <property type="match status" value="1"/>
</dbReference>
<name>FPG_CAUSK</name>